<feature type="chain" id="PRO_0000382530" description="Probable cytosolic iron-sulfur protein assembly protein 1">
    <location>
        <begin position="1"/>
        <end position="330"/>
    </location>
</feature>
<feature type="repeat" description="WD 1">
    <location>
        <begin position="12"/>
        <end position="49"/>
    </location>
</feature>
<feature type="repeat" description="WD 2">
    <location>
        <begin position="56"/>
        <end position="95"/>
    </location>
</feature>
<feature type="repeat" description="WD 3">
    <location>
        <begin position="105"/>
        <end position="144"/>
    </location>
</feature>
<feature type="repeat" description="WD 4">
    <location>
        <begin position="151"/>
        <end position="190"/>
    </location>
</feature>
<feature type="repeat" description="WD 5">
    <location>
        <begin position="195"/>
        <end position="236"/>
    </location>
</feature>
<feature type="repeat" description="WD 6">
    <location>
        <begin position="248"/>
        <end position="286"/>
    </location>
</feature>
<feature type="repeat" description="WD 7">
    <location>
        <begin position="292"/>
        <end position="330"/>
    </location>
</feature>
<reference key="1">
    <citation type="journal article" date="2007" name="Proc. Natl. Acad. Sci. U.S.A.">
        <title>Genome sequencing and comparative analysis of Saccharomyces cerevisiae strain YJM789.</title>
        <authorList>
            <person name="Wei W."/>
            <person name="McCusker J.H."/>
            <person name="Hyman R.W."/>
            <person name="Jones T."/>
            <person name="Ning Y."/>
            <person name="Cao Z."/>
            <person name="Gu Z."/>
            <person name="Bruno D."/>
            <person name="Miranda M."/>
            <person name="Nguyen M."/>
            <person name="Wilhelmy J."/>
            <person name="Komp C."/>
            <person name="Tamse R."/>
            <person name="Wang X."/>
            <person name="Jia P."/>
            <person name="Luedi P."/>
            <person name="Oefner P.J."/>
            <person name="David L."/>
            <person name="Dietrich F.S."/>
            <person name="Li Y."/>
            <person name="Davis R.W."/>
            <person name="Steinmetz L.M."/>
        </authorList>
    </citation>
    <scope>NUCLEOTIDE SEQUENCE [LARGE SCALE GENOMIC DNA]</scope>
    <source>
        <strain>YJM789</strain>
    </source>
</reference>
<gene>
    <name evidence="1" type="primary">CIA1</name>
    <name type="ORF">SCY_1158</name>
</gene>
<proteinExistence type="inferred from homology"/>
<comment type="function">
    <text evidence="1">Essential component of the cytosolic iron-sulfur (Fe/S) protein assembly machinery. Required for the maturation of extramitochondrial Fe/S proteins.</text>
</comment>
<comment type="subunit">
    <text evidence="1">Interacts with NAR1.</text>
</comment>
<comment type="subcellular location">
    <subcellularLocation>
        <location evidence="1">Cytoplasm</location>
    </subcellularLocation>
    <subcellularLocation>
        <location evidence="1">Nucleus</location>
    </subcellularLocation>
    <text evidence="1">Preferentially localized to the nucleus.</text>
</comment>
<comment type="similarity">
    <text evidence="1">Belongs to the WD repeat CIA1 family.</text>
</comment>
<name>CIAO1_YEAS7</name>
<organism>
    <name type="scientific">Saccharomyces cerevisiae (strain YJM789)</name>
    <name type="common">Baker's yeast</name>
    <dbReference type="NCBI Taxonomy" id="307796"/>
    <lineage>
        <taxon>Eukaryota</taxon>
        <taxon>Fungi</taxon>
        <taxon>Dikarya</taxon>
        <taxon>Ascomycota</taxon>
        <taxon>Saccharomycotina</taxon>
        <taxon>Saccharomycetes</taxon>
        <taxon>Saccharomycetales</taxon>
        <taxon>Saccharomycetaceae</taxon>
        <taxon>Saccharomyces</taxon>
    </lineage>
</organism>
<accession>A6ZYM0</accession>
<evidence type="ECO:0000255" key="1">
    <source>
        <dbReference type="HAMAP-Rule" id="MF_03037"/>
    </source>
</evidence>
<sequence>MASINLIKSLKLYKEKIWSFDFSQGILATGSTDRKIKLVSVKDDDFTLIDVLDETAHKKAIRSVAWRPHTSLLAAGSFDSTVSIWAKEESADRTFEMDLLAIIEGHENEVKGVAWSNDGYYLATCSRDKSVWIWETDESGEEYECISVLQEHSQDVKHVIWHPSEALLASSSYDDTVRIWKDYDDDWECVAVLNGHEGTVWSSDFDKTEGVFRLCSGSDDSTVRVWKYMGDDEDDQQEWVCEAILPDVHKRQVYNVAWGFNGLIASVGADGVLAVYEEVDGEWKVFAKRALCHGVYEINVVKWLELNGKTILATGGDDGIVNFWSLEKAA</sequence>
<dbReference type="EMBL" id="AAFW02000145">
    <property type="protein sequence ID" value="EDN60600.1"/>
    <property type="molecule type" value="Genomic_DNA"/>
</dbReference>
<dbReference type="SMR" id="A6ZYM0"/>
<dbReference type="HOGENOM" id="CLU_000288_57_8_1"/>
<dbReference type="Proteomes" id="UP000007060">
    <property type="component" value="Unassembled WGS sequence"/>
</dbReference>
<dbReference type="GO" id="GO:0097361">
    <property type="term" value="C:cytosolic [4Fe-4S] assembly targeting complex"/>
    <property type="evidence" value="ECO:0007669"/>
    <property type="project" value="InterPro"/>
</dbReference>
<dbReference type="GO" id="GO:0005634">
    <property type="term" value="C:nucleus"/>
    <property type="evidence" value="ECO:0007669"/>
    <property type="project" value="UniProtKB-SubCell"/>
</dbReference>
<dbReference type="GO" id="GO:0016226">
    <property type="term" value="P:iron-sulfur cluster assembly"/>
    <property type="evidence" value="ECO:0007669"/>
    <property type="project" value="UniProtKB-UniRule"/>
</dbReference>
<dbReference type="CDD" id="cd00200">
    <property type="entry name" value="WD40"/>
    <property type="match status" value="1"/>
</dbReference>
<dbReference type="FunFam" id="2.130.10.10:FF:000705">
    <property type="entry name" value="Probable cytosolic iron-sulfur protein assembly protein 1"/>
    <property type="match status" value="1"/>
</dbReference>
<dbReference type="Gene3D" id="2.130.10.10">
    <property type="entry name" value="YVTN repeat-like/Quinoprotein amine dehydrogenase"/>
    <property type="match status" value="1"/>
</dbReference>
<dbReference type="HAMAP" id="MF_03037">
    <property type="entry name" value="ciao1"/>
    <property type="match status" value="1"/>
</dbReference>
<dbReference type="InterPro" id="IPR028608">
    <property type="entry name" value="CIAO1/Cia1"/>
</dbReference>
<dbReference type="InterPro" id="IPR020472">
    <property type="entry name" value="G-protein_beta_WD-40_rep"/>
</dbReference>
<dbReference type="InterPro" id="IPR015943">
    <property type="entry name" value="WD40/YVTN_repeat-like_dom_sf"/>
</dbReference>
<dbReference type="InterPro" id="IPR036322">
    <property type="entry name" value="WD40_repeat_dom_sf"/>
</dbReference>
<dbReference type="InterPro" id="IPR001680">
    <property type="entry name" value="WD40_rpt"/>
</dbReference>
<dbReference type="PANTHER" id="PTHR19920:SF0">
    <property type="entry name" value="CYTOSOLIC IRON-SULFUR PROTEIN ASSEMBLY PROTEIN CIAO1-RELATED"/>
    <property type="match status" value="1"/>
</dbReference>
<dbReference type="PANTHER" id="PTHR19920">
    <property type="entry name" value="WD40 PROTEIN CIAO1"/>
    <property type="match status" value="1"/>
</dbReference>
<dbReference type="Pfam" id="PF00400">
    <property type="entry name" value="WD40"/>
    <property type="match status" value="4"/>
</dbReference>
<dbReference type="PRINTS" id="PR00320">
    <property type="entry name" value="GPROTEINBRPT"/>
</dbReference>
<dbReference type="SMART" id="SM00320">
    <property type="entry name" value="WD40"/>
    <property type="match status" value="7"/>
</dbReference>
<dbReference type="SUPFAM" id="SSF50978">
    <property type="entry name" value="WD40 repeat-like"/>
    <property type="match status" value="1"/>
</dbReference>
<dbReference type="PROSITE" id="PS00678">
    <property type="entry name" value="WD_REPEATS_1"/>
    <property type="match status" value="1"/>
</dbReference>
<dbReference type="PROSITE" id="PS50082">
    <property type="entry name" value="WD_REPEATS_2"/>
    <property type="match status" value="5"/>
</dbReference>
<dbReference type="PROSITE" id="PS50294">
    <property type="entry name" value="WD_REPEATS_REGION"/>
    <property type="match status" value="1"/>
</dbReference>
<keyword id="KW-0963">Cytoplasm</keyword>
<keyword id="KW-0539">Nucleus</keyword>
<keyword id="KW-0677">Repeat</keyword>
<keyword id="KW-0853">WD repeat</keyword>
<protein>
    <recommendedName>
        <fullName evidence="1">Probable cytosolic iron-sulfur protein assembly protein 1</fullName>
    </recommendedName>
</protein>